<protein>
    <recommendedName>
        <fullName evidence="1">Cytoplasmic tRNA 2-thiolation protein 2</fullName>
    </recommendedName>
</protein>
<organism>
    <name type="scientific">Emericella nidulans (strain FGSC A4 / ATCC 38163 / CBS 112.46 / NRRL 194 / M139)</name>
    <name type="common">Aspergillus nidulans</name>
    <dbReference type="NCBI Taxonomy" id="227321"/>
    <lineage>
        <taxon>Eukaryota</taxon>
        <taxon>Fungi</taxon>
        <taxon>Dikarya</taxon>
        <taxon>Ascomycota</taxon>
        <taxon>Pezizomycotina</taxon>
        <taxon>Eurotiomycetes</taxon>
        <taxon>Eurotiomycetidae</taxon>
        <taxon>Eurotiales</taxon>
        <taxon>Aspergillaceae</taxon>
        <taxon>Aspergillus</taxon>
        <taxon>Aspergillus subgen. Nidulantes</taxon>
    </lineage>
</organism>
<accession>Q5BHB8</accession>
<accession>C8VR16</accession>
<dbReference type="EMBL" id="BN001308">
    <property type="protein sequence ID" value="CBF90275.1"/>
    <property type="status" value="ALT_SEQ"/>
    <property type="molecule type" value="Genomic_DNA"/>
</dbReference>
<dbReference type="EMBL" id="AACD01000003">
    <property type="protein sequence ID" value="EAA65240.1"/>
    <property type="status" value="ALT_SEQ"/>
    <property type="molecule type" value="Genomic_DNA"/>
</dbReference>
<dbReference type="RefSeq" id="XP_657666.1">
    <property type="nucleotide sequence ID" value="XM_652574.1"/>
</dbReference>
<dbReference type="FunCoup" id="Q5BHB8">
    <property type="interactions" value="171"/>
</dbReference>
<dbReference type="STRING" id="227321.Q5BHB8"/>
<dbReference type="KEGG" id="ani:ANIA_00062"/>
<dbReference type="VEuPathDB" id="FungiDB:AN0062"/>
<dbReference type="eggNOG" id="KOG2594">
    <property type="taxonomic scope" value="Eukaryota"/>
</dbReference>
<dbReference type="HOGENOM" id="CLU_024534_3_0_1"/>
<dbReference type="InParanoid" id="Q5BHB8"/>
<dbReference type="OrthoDB" id="25129at2759"/>
<dbReference type="UniPathway" id="UPA00988"/>
<dbReference type="Proteomes" id="UP000000560">
    <property type="component" value="Chromosome VIII"/>
</dbReference>
<dbReference type="GO" id="GO:0005829">
    <property type="term" value="C:cytosol"/>
    <property type="evidence" value="ECO:0000318"/>
    <property type="project" value="GO_Central"/>
</dbReference>
<dbReference type="GO" id="GO:0016779">
    <property type="term" value="F:nucleotidyltransferase activity"/>
    <property type="evidence" value="ECO:0007669"/>
    <property type="project" value="UniProtKB-UniRule"/>
</dbReference>
<dbReference type="GO" id="GO:0016783">
    <property type="term" value="F:sulfurtransferase activity"/>
    <property type="evidence" value="ECO:0000318"/>
    <property type="project" value="GO_Central"/>
</dbReference>
<dbReference type="GO" id="GO:0000049">
    <property type="term" value="F:tRNA binding"/>
    <property type="evidence" value="ECO:0007669"/>
    <property type="project" value="InterPro"/>
</dbReference>
<dbReference type="GO" id="GO:0032447">
    <property type="term" value="P:protein urmylation"/>
    <property type="evidence" value="ECO:0007669"/>
    <property type="project" value="UniProtKB-UniRule"/>
</dbReference>
<dbReference type="GO" id="GO:0002143">
    <property type="term" value="P:tRNA wobble position uridine thiolation"/>
    <property type="evidence" value="ECO:0000318"/>
    <property type="project" value="GO_Central"/>
</dbReference>
<dbReference type="FunFam" id="3.40.50.620:FF:000143">
    <property type="entry name" value="Cytoplasmic tRNA 2-thiolation protein 2"/>
    <property type="match status" value="1"/>
</dbReference>
<dbReference type="Gene3D" id="3.40.50.620">
    <property type="entry name" value="HUPs"/>
    <property type="match status" value="1"/>
</dbReference>
<dbReference type="HAMAP" id="MF_03054">
    <property type="entry name" value="CTU2"/>
    <property type="match status" value="1"/>
</dbReference>
<dbReference type="InterPro" id="IPR019407">
    <property type="entry name" value="CTU2"/>
</dbReference>
<dbReference type="InterPro" id="IPR014729">
    <property type="entry name" value="Rossmann-like_a/b/a_fold"/>
</dbReference>
<dbReference type="PANTHER" id="PTHR20882">
    <property type="entry name" value="CYTOPLASMIC TRNA 2-THIOLATION PROTEIN 2"/>
    <property type="match status" value="1"/>
</dbReference>
<dbReference type="PANTHER" id="PTHR20882:SF14">
    <property type="entry name" value="CYTOPLASMIC TRNA 2-THIOLATION PROTEIN 2"/>
    <property type="match status" value="1"/>
</dbReference>
<dbReference type="Pfam" id="PF10288">
    <property type="entry name" value="CTU2"/>
    <property type="match status" value="1"/>
</dbReference>
<dbReference type="SUPFAM" id="SSF52402">
    <property type="entry name" value="Adenine nucleotide alpha hydrolases-like"/>
    <property type="match status" value="1"/>
</dbReference>
<keyword id="KW-0963">Cytoplasm</keyword>
<keyword id="KW-1185">Reference proteome</keyword>
<keyword id="KW-0819">tRNA processing</keyword>
<gene>
    <name type="primary">ncs2</name>
    <name type="synonym">ctu2</name>
    <name type="ORF">AN0062</name>
</gene>
<feature type="chain" id="PRO_0000424037" description="Cytoplasmic tRNA 2-thiolation protein 2">
    <location>
        <begin position="1"/>
        <end position="325"/>
    </location>
</feature>
<sequence length="325" mass="35876">MEKYRLRRDLPRSGPCPVLLPLSYGLSSSVLLHMVHGQVERLLTKPHPPPGFELHVLIVEPSSISPSNPSHRGAFQLLQQQFPHASFTQLPLHSVFDYVSGLNDILAEYVGPAFVDDTSLPSKERLDAFRASITSATSAADVDSVLLNRLIIAFARSLGCLGIIWGDSDDRLAAKTLANVSKGRGSSLTWQVSDGTSPFGLEFSFPLRDLFTAELQSYANFFPELLNIIIPDGPLSDNILTKNLSIDQLMMRYVSSQGAKYPGVMSNVTRTVNKLESSRMITDGLRCALCDTFICNPEGRQTMDLEERPTNHFCYACERSRPGLS</sequence>
<comment type="function">
    <text evidence="1">Plays a central role in 2-thiolation of mcm(5)S(2)U at tRNA wobble positions of tRNA(Lys), tRNA(Glu) and tRNA(Gln). May act by forming a heterodimer with ncs6 that ligates sulfur from thiocarboxylated urm1 onto the uridine of tRNAs at wobble position. Prior mcm(5) tRNA modification by the elongator complex is required for 2-thiolation. May also be involved in protein urmylation.</text>
</comment>
<comment type="pathway">
    <text evidence="1">tRNA modification; 5-methoxycarbonylmethyl-2-thiouridine-tRNA biosynthesis.</text>
</comment>
<comment type="subcellular location">
    <subcellularLocation>
        <location evidence="1">Cytoplasm</location>
    </subcellularLocation>
</comment>
<comment type="similarity">
    <text evidence="1">Belongs to the CTU2/NCS2 family.</text>
</comment>
<comment type="sequence caution" evidence="2">
    <conflict type="erroneous gene model prediction">
        <sequence resource="EMBL-CDS" id="CBF90275"/>
    </conflict>
</comment>
<comment type="sequence caution" evidence="2">
    <conflict type="erroneous gene model prediction">
        <sequence resource="EMBL-CDS" id="EAA65240"/>
    </conflict>
</comment>
<proteinExistence type="inferred from homology"/>
<reference key="1">
    <citation type="journal article" date="2005" name="Nature">
        <title>Sequencing of Aspergillus nidulans and comparative analysis with A. fumigatus and A. oryzae.</title>
        <authorList>
            <person name="Galagan J.E."/>
            <person name="Calvo S.E."/>
            <person name="Cuomo C."/>
            <person name="Ma L.-J."/>
            <person name="Wortman J.R."/>
            <person name="Batzoglou S."/>
            <person name="Lee S.-I."/>
            <person name="Bastuerkmen M."/>
            <person name="Spevak C.C."/>
            <person name="Clutterbuck J."/>
            <person name="Kapitonov V."/>
            <person name="Jurka J."/>
            <person name="Scazzocchio C."/>
            <person name="Farman M.L."/>
            <person name="Butler J."/>
            <person name="Purcell S."/>
            <person name="Harris S."/>
            <person name="Braus G.H."/>
            <person name="Draht O."/>
            <person name="Busch S."/>
            <person name="D'Enfert C."/>
            <person name="Bouchier C."/>
            <person name="Goldman G.H."/>
            <person name="Bell-Pedersen D."/>
            <person name="Griffiths-Jones S."/>
            <person name="Doonan J.H."/>
            <person name="Yu J."/>
            <person name="Vienken K."/>
            <person name="Pain A."/>
            <person name="Freitag M."/>
            <person name="Selker E.U."/>
            <person name="Archer D.B."/>
            <person name="Penalva M.A."/>
            <person name="Oakley B.R."/>
            <person name="Momany M."/>
            <person name="Tanaka T."/>
            <person name="Kumagai T."/>
            <person name="Asai K."/>
            <person name="Machida M."/>
            <person name="Nierman W.C."/>
            <person name="Denning D.W."/>
            <person name="Caddick M.X."/>
            <person name="Hynes M."/>
            <person name="Paoletti M."/>
            <person name="Fischer R."/>
            <person name="Miller B.L."/>
            <person name="Dyer P.S."/>
            <person name="Sachs M.S."/>
            <person name="Osmani S.A."/>
            <person name="Birren B.W."/>
        </authorList>
    </citation>
    <scope>NUCLEOTIDE SEQUENCE [LARGE SCALE GENOMIC DNA]</scope>
    <source>
        <strain>FGSC A4 / ATCC 38163 / CBS 112.46 / NRRL 194 / M139</strain>
    </source>
</reference>
<reference key="2">
    <citation type="journal article" date="2009" name="Fungal Genet. Biol.">
        <title>The 2008 update of the Aspergillus nidulans genome annotation: a community effort.</title>
        <authorList>
            <person name="Wortman J.R."/>
            <person name="Gilsenan J.M."/>
            <person name="Joardar V."/>
            <person name="Deegan J."/>
            <person name="Clutterbuck J."/>
            <person name="Andersen M.R."/>
            <person name="Archer D."/>
            <person name="Bencina M."/>
            <person name="Braus G."/>
            <person name="Coutinho P."/>
            <person name="von Dohren H."/>
            <person name="Doonan J."/>
            <person name="Driessen A.J."/>
            <person name="Durek P."/>
            <person name="Espeso E."/>
            <person name="Fekete E."/>
            <person name="Flipphi M."/>
            <person name="Estrada C.G."/>
            <person name="Geysens S."/>
            <person name="Goldman G."/>
            <person name="de Groot P.W."/>
            <person name="Hansen K."/>
            <person name="Harris S.D."/>
            <person name="Heinekamp T."/>
            <person name="Helmstaedt K."/>
            <person name="Henrissat B."/>
            <person name="Hofmann G."/>
            <person name="Homan T."/>
            <person name="Horio T."/>
            <person name="Horiuchi H."/>
            <person name="James S."/>
            <person name="Jones M."/>
            <person name="Karaffa L."/>
            <person name="Karanyi Z."/>
            <person name="Kato M."/>
            <person name="Keller N."/>
            <person name="Kelly D.E."/>
            <person name="Kiel J.A."/>
            <person name="Kim J.M."/>
            <person name="van der Klei I.J."/>
            <person name="Klis F.M."/>
            <person name="Kovalchuk A."/>
            <person name="Krasevec N."/>
            <person name="Kubicek C.P."/>
            <person name="Liu B."/>
            <person name="Maccabe A."/>
            <person name="Meyer V."/>
            <person name="Mirabito P."/>
            <person name="Miskei M."/>
            <person name="Mos M."/>
            <person name="Mullins J."/>
            <person name="Nelson D.R."/>
            <person name="Nielsen J."/>
            <person name="Oakley B.R."/>
            <person name="Osmani S.A."/>
            <person name="Pakula T."/>
            <person name="Paszewski A."/>
            <person name="Paulsen I."/>
            <person name="Pilsyk S."/>
            <person name="Pocsi I."/>
            <person name="Punt P.J."/>
            <person name="Ram A.F."/>
            <person name="Ren Q."/>
            <person name="Robellet X."/>
            <person name="Robson G."/>
            <person name="Seiboth B."/>
            <person name="van Solingen P."/>
            <person name="Specht T."/>
            <person name="Sun J."/>
            <person name="Taheri-Talesh N."/>
            <person name="Takeshita N."/>
            <person name="Ussery D."/>
            <person name="vanKuyk P.A."/>
            <person name="Visser H."/>
            <person name="van de Vondervoort P.J."/>
            <person name="de Vries R.P."/>
            <person name="Walton J."/>
            <person name="Xiang X."/>
            <person name="Xiong Y."/>
            <person name="Zeng A.P."/>
            <person name="Brandt B.W."/>
            <person name="Cornell M.J."/>
            <person name="van den Hondel C.A."/>
            <person name="Visser J."/>
            <person name="Oliver S.G."/>
            <person name="Turner G."/>
        </authorList>
    </citation>
    <scope>GENOME REANNOTATION</scope>
    <source>
        <strain>FGSC A4 / ATCC 38163 / CBS 112.46 / NRRL 194 / M139</strain>
    </source>
</reference>
<evidence type="ECO:0000255" key="1">
    <source>
        <dbReference type="HAMAP-Rule" id="MF_03054"/>
    </source>
</evidence>
<evidence type="ECO:0000305" key="2"/>
<name>CTU2_EMENI</name>